<accession>P29017</accession>
<accession>Q5TDJ7</accession>
<accession>Q6IAS4</accession>
<accession>Q9UMM0</accession>
<accession>Q9UN96</accession>
<sequence>MLFLQFLLLALLLPGGDNADASQEHVSFHVIQIFSFVNQSWARGQGSGWLDELQTHGWDSESGTIIFLHNWSKGNFSNEELSDLELLFRFYLFGLTREIQDHASQDYSKYPFEVQVKAGCELHSGKSPEGFFQVAFNGLDLLSFQNTTWVPSPGCGSLAQSVCHLLNHQYEGVTETVYNLIRSTCPRFLLGLLDAGKMYVHRQVRPEAWLSSRPSLGSGQLLLVCHASGFYPKPVWVTWMRNEQEQLGTKHGDILPNADGTWYLQVILEVASEEPAGLSCRVRHSSLGGQDIILYWGHHFSMNWIALVVIVPLVILIVLVLWFKKHCSYQDIL</sequence>
<protein>
    <recommendedName>
        <fullName>T-cell surface glycoprotein CD1c</fullName>
    </recommendedName>
    <cdAntigenName>CD1c</cdAntigenName>
</protein>
<proteinExistence type="evidence at protein level"/>
<feature type="signal peptide" evidence="1">
    <location>
        <begin position="1"/>
        <end position="17"/>
    </location>
</feature>
<feature type="chain" id="PRO_0000014580" description="T-cell surface glycoprotein CD1c">
    <location>
        <begin position="18"/>
        <end position="333"/>
    </location>
</feature>
<feature type="topological domain" description="Extracellular" evidence="1">
    <location>
        <begin position="18"/>
        <end position="302"/>
    </location>
</feature>
<feature type="transmembrane region" description="Helical" evidence="1">
    <location>
        <begin position="303"/>
        <end position="323"/>
    </location>
</feature>
<feature type="topological domain" description="Cytoplasmic" evidence="1">
    <location>
        <begin position="324"/>
        <end position="333"/>
    </location>
</feature>
<feature type="domain" description="Ig-like">
    <location>
        <begin position="206"/>
        <end position="296"/>
    </location>
</feature>
<feature type="short sequence motif" description="Internalization signal">
    <location>
        <begin position="329"/>
        <end position="332"/>
    </location>
</feature>
<feature type="glycosylation site" description="N-linked (GlcNAc...) asparagine" evidence="6 7">
    <location>
        <position position="38"/>
    </location>
</feature>
<feature type="glycosylation site" description="N-linked (GlcNAc...) asparagine" evidence="1">
    <location>
        <position position="70"/>
    </location>
</feature>
<feature type="glycosylation site" description="N-linked (GlcNAc...) asparagine" evidence="6">
    <location>
        <position position="75"/>
    </location>
</feature>
<feature type="glycosylation site" description="N-linked (GlcNAc...) asparagine" evidence="1">
    <location>
        <position position="146"/>
    </location>
</feature>
<feature type="disulfide bond" evidence="2 7">
    <location>
        <begin position="120"/>
        <end position="185"/>
    </location>
</feature>
<feature type="disulfide bond" evidence="2">
    <location>
        <begin position="225"/>
        <end position="280"/>
    </location>
</feature>
<feature type="sequence variant" id="VAR_031564" description="In dbSNP:rs3138100.">
    <original>N</original>
    <variation>T</variation>
    <location>
        <position position="70"/>
    </location>
</feature>
<feature type="sequence variant" id="VAR_031565" description="In dbSNP:rs3138105." evidence="8">
    <original>F</original>
    <variation>S</variation>
    <location>
        <position position="300"/>
    </location>
</feature>
<feature type="sequence conflict" description="In Ref. 3; CAG33361." evidence="10" ref="3">
    <original>Q</original>
    <variation>R</variation>
    <location>
        <position position="290"/>
    </location>
</feature>
<feature type="sequence conflict" description="In Ref. 1; AAA51942." evidence="10" ref="1">
    <original>CSYQDIL</original>
    <variation>W</variation>
    <location>
        <begin position="327"/>
        <end position="333"/>
    </location>
</feature>
<feature type="strand" evidence="12">
    <location>
        <begin position="25"/>
        <end position="38"/>
    </location>
</feature>
<feature type="strand" evidence="12">
    <location>
        <begin position="41"/>
        <end position="50"/>
    </location>
</feature>
<feature type="strand" evidence="12">
    <location>
        <begin position="53"/>
        <end position="59"/>
    </location>
</feature>
<feature type="turn" evidence="12">
    <location>
        <begin position="60"/>
        <end position="63"/>
    </location>
</feature>
<feature type="strand" evidence="12">
    <location>
        <begin position="64"/>
        <end position="67"/>
    </location>
</feature>
<feature type="turn" evidence="12">
    <location>
        <begin position="70"/>
        <end position="75"/>
    </location>
</feature>
<feature type="helix" evidence="12">
    <location>
        <begin position="78"/>
        <end position="103"/>
    </location>
</feature>
<feature type="helix" evidence="12">
    <location>
        <begin position="107"/>
        <end position="109"/>
    </location>
</feature>
<feature type="strand" evidence="12">
    <location>
        <begin position="111"/>
        <end position="123"/>
    </location>
</feature>
<feature type="strand" evidence="13">
    <location>
        <begin position="124"/>
        <end position="126"/>
    </location>
</feature>
<feature type="strand" evidence="12">
    <location>
        <begin position="129"/>
        <end position="136"/>
    </location>
</feature>
<feature type="strand" evidence="12">
    <location>
        <begin position="139"/>
        <end position="144"/>
    </location>
</feature>
<feature type="strand" evidence="12">
    <location>
        <begin position="146"/>
        <end position="151"/>
    </location>
</feature>
<feature type="strand" evidence="13">
    <location>
        <begin position="153"/>
        <end position="155"/>
    </location>
</feature>
<feature type="helix" evidence="12">
    <location>
        <begin position="157"/>
        <end position="168"/>
    </location>
</feature>
<feature type="helix" evidence="12">
    <location>
        <begin position="171"/>
        <end position="182"/>
    </location>
</feature>
<feature type="helix" evidence="12">
    <location>
        <begin position="184"/>
        <end position="200"/>
    </location>
</feature>
<feature type="strand" evidence="13">
    <location>
        <begin position="207"/>
        <end position="214"/>
    </location>
</feature>
<feature type="strand" evidence="13">
    <location>
        <begin position="221"/>
        <end position="233"/>
    </location>
</feature>
<feature type="strand" evidence="13">
    <location>
        <begin position="235"/>
        <end position="241"/>
    </location>
</feature>
<feature type="strand" evidence="13">
    <location>
        <begin position="244"/>
        <end position="246"/>
    </location>
</feature>
<feature type="strand" evidence="13">
    <location>
        <begin position="249"/>
        <end position="251"/>
    </location>
</feature>
<feature type="strand" evidence="11">
    <location>
        <begin position="262"/>
        <end position="264"/>
    </location>
</feature>
<feature type="strand" evidence="13">
    <location>
        <begin position="278"/>
        <end position="284"/>
    </location>
</feature>
<feature type="helix" evidence="13">
    <location>
        <begin position="285"/>
        <end position="287"/>
    </location>
</feature>
<feature type="strand" evidence="13">
    <location>
        <begin position="292"/>
        <end position="295"/>
    </location>
</feature>
<organism>
    <name type="scientific">Homo sapiens</name>
    <name type="common">Human</name>
    <dbReference type="NCBI Taxonomy" id="9606"/>
    <lineage>
        <taxon>Eukaryota</taxon>
        <taxon>Metazoa</taxon>
        <taxon>Chordata</taxon>
        <taxon>Craniata</taxon>
        <taxon>Vertebrata</taxon>
        <taxon>Euteleostomi</taxon>
        <taxon>Mammalia</taxon>
        <taxon>Eutheria</taxon>
        <taxon>Euarchontoglires</taxon>
        <taxon>Primates</taxon>
        <taxon>Haplorrhini</taxon>
        <taxon>Catarrhini</taxon>
        <taxon>Hominidae</taxon>
        <taxon>Homo</taxon>
    </lineage>
</organism>
<keyword id="KW-0002">3D-structure</keyword>
<keyword id="KW-1064">Adaptive immunity</keyword>
<keyword id="KW-1003">Cell membrane</keyword>
<keyword id="KW-1015">Disulfide bond</keyword>
<keyword id="KW-0967">Endosome</keyword>
<keyword id="KW-0325">Glycoprotein</keyword>
<keyword id="KW-0391">Immunity</keyword>
<keyword id="KW-0393">Immunoglobulin domain</keyword>
<keyword id="KW-0446">Lipid-binding</keyword>
<keyword id="KW-0458">Lysosome</keyword>
<keyword id="KW-0472">Membrane</keyword>
<keyword id="KW-1267">Proteomics identification</keyword>
<keyword id="KW-1185">Reference proteome</keyword>
<keyword id="KW-0732">Signal</keyword>
<keyword id="KW-0812">Transmembrane</keyword>
<keyword id="KW-1133">Transmembrane helix</keyword>
<dbReference type="EMBL" id="M22178">
    <property type="protein sequence ID" value="AAA51942.1"/>
    <property type="molecule type" value="Genomic_DNA"/>
</dbReference>
<dbReference type="EMBL" id="M22174">
    <property type="protein sequence ID" value="AAA51942.1"/>
    <property type="status" value="JOINED"/>
    <property type="molecule type" value="Genomic_DNA"/>
</dbReference>
<dbReference type="EMBL" id="M22175">
    <property type="protein sequence ID" value="AAA51942.1"/>
    <property type="status" value="JOINED"/>
    <property type="molecule type" value="Genomic_DNA"/>
</dbReference>
<dbReference type="EMBL" id="M22176">
    <property type="protein sequence ID" value="AAA51942.1"/>
    <property type="status" value="JOINED"/>
    <property type="molecule type" value="Genomic_DNA"/>
</dbReference>
<dbReference type="EMBL" id="M22177">
    <property type="protein sequence ID" value="AAA51942.1"/>
    <property type="status" value="JOINED"/>
    <property type="molecule type" value="Genomic_DNA"/>
</dbReference>
<dbReference type="EMBL" id="M28827">
    <property type="protein sequence ID" value="AAA51941.1"/>
    <property type="molecule type" value="mRNA"/>
</dbReference>
<dbReference type="EMBL" id="CR457080">
    <property type="protein sequence ID" value="CAG33361.1"/>
    <property type="molecule type" value="mRNA"/>
</dbReference>
<dbReference type="EMBL" id="AL121986">
    <property type="status" value="NOT_ANNOTATED_CDS"/>
    <property type="molecule type" value="Genomic_DNA"/>
</dbReference>
<dbReference type="EMBL" id="BC126465">
    <property type="protein sequence ID" value="AAI26466.1"/>
    <property type="molecule type" value="mRNA"/>
</dbReference>
<dbReference type="EMBL" id="BC126467">
    <property type="protein sequence ID" value="AAI26468.1"/>
    <property type="molecule type" value="mRNA"/>
</dbReference>
<dbReference type="EMBL" id="AF142667">
    <property type="protein sequence ID" value="AAD37580.1"/>
    <property type="molecule type" value="Genomic_DNA"/>
</dbReference>
<dbReference type="EMBL" id="M14667">
    <property type="protein sequence ID" value="AAA51938.1"/>
    <property type="molecule type" value="Genomic_DNA"/>
</dbReference>
<dbReference type="CCDS" id="CCDS1175.1"/>
<dbReference type="PIR" id="C45801">
    <property type="entry name" value="HLHUCC"/>
</dbReference>
<dbReference type="RefSeq" id="NP_001756.2">
    <property type="nucleotide sequence ID" value="NM_001765.3"/>
</dbReference>
<dbReference type="PDB" id="3OV6">
    <property type="method" value="X-ray"/>
    <property type="resolution" value="2.50 A"/>
    <property type="chains" value="A=19-201"/>
</dbReference>
<dbReference type="PDB" id="4ONO">
    <property type="method" value="X-ray"/>
    <property type="resolution" value="2.70 A"/>
    <property type="chains" value="A=24-201"/>
</dbReference>
<dbReference type="PDB" id="5C9J">
    <property type="method" value="X-ray"/>
    <property type="resolution" value="2.40 A"/>
    <property type="chains" value="A=24-203"/>
</dbReference>
<dbReference type="PDB" id="6C09">
    <property type="method" value="X-ray"/>
    <property type="resolution" value="2.95 A"/>
    <property type="chains" value="A=19-297"/>
</dbReference>
<dbReference type="PDB" id="6C15">
    <property type="method" value="X-ray"/>
    <property type="resolution" value="3.21 A"/>
    <property type="chains" value="A=19-297"/>
</dbReference>
<dbReference type="PDBsum" id="3OV6"/>
<dbReference type="PDBsum" id="4ONO"/>
<dbReference type="PDBsum" id="5C9J"/>
<dbReference type="PDBsum" id="6C09"/>
<dbReference type="PDBsum" id="6C15"/>
<dbReference type="SMR" id="P29017"/>
<dbReference type="FunCoup" id="P29017">
    <property type="interactions" value="271"/>
</dbReference>
<dbReference type="IntAct" id="P29017">
    <property type="interactions" value="4"/>
</dbReference>
<dbReference type="STRING" id="9606.ENSP00000357152"/>
<dbReference type="GlyCosmos" id="P29017">
    <property type="glycosylation" value="4 sites, No reported glycans"/>
</dbReference>
<dbReference type="GlyGen" id="P29017">
    <property type="glycosylation" value="5 sites"/>
</dbReference>
<dbReference type="iPTMnet" id="P29017"/>
<dbReference type="PhosphoSitePlus" id="P29017"/>
<dbReference type="SwissPalm" id="P29017"/>
<dbReference type="BioMuta" id="CD1C"/>
<dbReference type="DMDM" id="143811371"/>
<dbReference type="MassIVE" id="P29017"/>
<dbReference type="PaxDb" id="9606-ENSP00000357152"/>
<dbReference type="PeptideAtlas" id="P29017"/>
<dbReference type="ProteomicsDB" id="54513"/>
<dbReference type="Antibodypedia" id="20454">
    <property type="antibodies" value="793 antibodies from 34 providers"/>
</dbReference>
<dbReference type="DNASU" id="911"/>
<dbReference type="Ensembl" id="ENST00000368170.8">
    <property type="protein sequence ID" value="ENSP00000357152.3"/>
    <property type="gene ID" value="ENSG00000158481.13"/>
</dbReference>
<dbReference type="GeneID" id="911"/>
<dbReference type="KEGG" id="hsa:911"/>
<dbReference type="MANE-Select" id="ENST00000368170.8">
    <property type="protein sequence ID" value="ENSP00000357152.3"/>
    <property type="RefSeq nucleotide sequence ID" value="NM_001765.3"/>
    <property type="RefSeq protein sequence ID" value="NP_001756.2"/>
</dbReference>
<dbReference type="UCSC" id="uc001fru.4">
    <property type="organism name" value="human"/>
</dbReference>
<dbReference type="AGR" id="HGNC:1636"/>
<dbReference type="CTD" id="911"/>
<dbReference type="DisGeNET" id="911"/>
<dbReference type="GeneCards" id="CD1C"/>
<dbReference type="HGNC" id="HGNC:1636">
    <property type="gene designation" value="CD1C"/>
</dbReference>
<dbReference type="HPA" id="ENSG00000158481">
    <property type="expression patterns" value="Tissue enriched (lymphoid)"/>
</dbReference>
<dbReference type="MIM" id="188340">
    <property type="type" value="gene"/>
</dbReference>
<dbReference type="neXtProt" id="NX_P29017"/>
<dbReference type="OpenTargets" id="ENSG00000158481"/>
<dbReference type="PharmGKB" id="PA26195"/>
<dbReference type="VEuPathDB" id="HostDB:ENSG00000158481"/>
<dbReference type="eggNOG" id="ENOG502SJH6">
    <property type="taxonomic scope" value="Eukaryota"/>
</dbReference>
<dbReference type="GeneTree" id="ENSGT01120000271825"/>
<dbReference type="HOGENOM" id="CLU_047501_9_2_1"/>
<dbReference type="InParanoid" id="P29017"/>
<dbReference type="OMA" id="DMQTHGW"/>
<dbReference type="OrthoDB" id="8890485at2759"/>
<dbReference type="PAN-GO" id="P29017">
    <property type="GO annotations" value="9 GO annotations based on evolutionary models"/>
</dbReference>
<dbReference type="PhylomeDB" id="P29017"/>
<dbReference type="TreeFam" id="TF336723"/>
<dbReference type="PathwayCommons" id="P29017"/>
<dbReference type="Reactome" id="R-HSA-198933">
    <property type="pathway name" value="Immunoregulatory interactions between a Lymphoid and a non-Lymphoid cell"/>
</dbReference>
<dbReference type="SignaLink" id="P29017"/>
<dbReference type="BioGRID-ORCS" id="911">
    <property type="hits" value="11 hits in 1143 CRISPR screens"/>
</dbReference>
<dbReference type="ChiTaRS" id="CD1C">
    <property type="organism name" value="human"/>
</dbReference>
<dbReference type="GenomeRNAi" id="911"/>
<dbReference type="Pharos" id="P29017">
    <property type="development level" value="Tbio"/>
</dbReference>
<dbReference type="PRO" id="PR:P29017"/>
<dbReference type="Proteomes" id="UP000005640">
    <property type="component" value="Chromosome 1"/>
</dbReference>
<dbReference type="RNAct" id="P29017">
    <property type="molecule type" value="protein"/>
</dbReference>
<dbReference type="Bgee" id="ENSG00000158481">
    <property type="expression patterns" value="Expressed in thymus and 140 other cell types or tissues"/>
</dbReference>
<dbReference type="ExpressionAtlas" id="P29017">
    <property type="expression patterns" value="baseline and differential"/>
</dbReference>
<dbReference type="GO" id="GO:0005783">
    <property type="term" value="C:endoplasmic reticulum"/>
    <property type="evidence" value="ECO:0000314"/>
    <property type="project" value="HPA"/>
</dbReference>
<dbReference type="GO" id="GO:0010008">
    <property type="term" value="C:endosome membrane"/>
    <property type="evidence" value="ECO:0007669"/>
    <property type="project" value="UniProtKB-SubCell"/>
</dbReference>
<dbReference type="GO" id="GO:0009897">
    <property type="term" value="C:external side of plasma membrane"/>
    <property type="evidence" value="ECO:0000318"/>
    <property type="project" value="GO_Central"/>
</dbReference>
<dbReference type="GO" id="GO:0005615">
    <property type="term" value="C:extracellular space"/>
    <property type="evidence" value="ECO:0000318"/>
    <property type="project" value="GO_Central"/>
</dbReference>
<dbReference type="GO" id="GO:0005794">
    <property type="term" value="C:Golgi apparatus"/>
    <property type="evidence" value="ECO:0000314"/>
    <property type="project" value="HPA"/>
</dbReference>
<dbReference type="GO" id="GO:0043231">
    <property type="term" value="C:intracellular membrane-bounded organelle"/>
    <property type="evidence" value="ECO:0000314"/>
    <property type="project" value="HPA"/>
</dbReference>
<dbReference type="GO" id="GO:0005764">
    <property type="term" value="C:lysosome"/>
    <property type="evidence" value="ECO:0007669"/>
    <property type="project" value="UniProtKB-SubCell"/>
</dbReference>
<dbReference type="GO" id="GO:0005886">
    <property type="term" value="C:plasma membrane"/>
    <property type="evidence" value="ECO:0000304"/>
    <property type="project" value="Reactome"/>
</dbReference>
<dbReference type="GO" id="GO:0030883">
    <property type="term" value="F:endogenous lipid antigen binding"/>
    <property type="evidence" value="ECO:0000314"/>
    <property type="project" value="UniProtKB"/>
</dbReference>
<dbReference type="GO" id="GO:0030884">
    <property type="term" value="F:exogenous lipid antigen binding"/>
    <property type="evidence" value="ECO:0000314"/>
    <property type="project" value="UniProtKB"/>
</dbReference>
<dbReference type="GO" id="GO:0051861">
    <property type="term" value="F:glycolipid binding"/>
    <property type="evidence" value="ECO:0000314"/>
    <property type="project" value="UniProtKB"/>
</dbReference>
<dbReference type="GO" id="GO:0071723">
    <property type="term" value="F:lipopeptide binding"/>
    <property type="evidence" value="ECO:0000314"/>
    <property type="project" value="UniProtKB"/>
</dbReference>
<dbReference type="GO" id="GO:0002250">
    <property type="term" value="P:adaptive immune response"/>
    <property type="evidence" value="ECO:0007669"/>
    <property type="project" value="UniProtKB-KW"/>
</dbReference>
<dbReference type="GO" id="GO:0048006">
    <property type="term" value="P:antigen processing and presentation, endogenous lipid antigen via MHC class Ib"/>
    <property type="evidence" value="ECO:0000318"/>
    <property type="project" value="GO_Central"/>
</dbReference>
<dbReference type="GO" id="GO:0048007">
    <property type="term" value="P:antigen processing and presentation, exogenous lipid antigen via MHC class Ib"/>
    <property type="evidence" value="ECO:0000318"/>
    <property type="project" value="GO_Central"/>
</dbReference>
<dbReference type="GO" id="GO:0006955">
    <property type="term" value="P:immune response"/>
    <property type="evidence" value="ECO:0000318"/>
    <property type="project" value="GO_Central"/>
</dbReference>
<dbReference type="GO" id="GO:0001916">
    <property type="term" value="P:positive regulation of T cell mediated cytotoxicity"/>
    <property type="evidence" value="ECO:0000318"/>
    <property type="project" value="GO_Central"/>
</dbReference>
<dbReference type="GO" id="GO:0002286">
    <property type="term" value="P:T cell activation involved in immune response"/>
    <property type="evidence" value="ECO:0000314"/>
    <property type="project" value="UniProtKB"/>
</dbReference>
<dbReference type="CDD" id="cd21029">
    <property type="entry name" value="IgC1_CD1"/>
    <property type="match status" value="1"/>
</dbReference>
<dbReference type="FunFam" id="2.60.40.10:FF:000254">
    <property type="entry name" value="Antigen-presenting glycoprotein CD1d1"/>
    <property type="match status" value="1"/>
</dbReference>
<dbReference type="FunFam" id="3.30.500.10:FF:000002">
    <property type="entry name" value="Antigen-presenting glycoprotein CD1d1"/>
    <property type="match status" value="1"/>
</dbReference>
<dbReference type="Gene3D" id="2.60.40.10">
    <property type="entry name" value="Immunoglobulins"/>
    <property type="match status" value="1"/>
</dbReference>
<dbReference type="Gene3D" id="3.30.500.10">
    <property type="entry name" value="MHC class I-like antigen recognition-like"/>
    <property type="match status" value="1"/>
</dbReference>
<dbReference type="InterPro" id="IPR007110">
    <property type="entry name" value="Ig-like_dom"/>
</dbReference>
<dbReference type="InterPro" id="IPR036179">
    <property type="entry name" value="Ig-like_dom_sf"/>
</dbReference>
<dbReference type="InterPro" id="IPR013783">
    <property type="entry name" value="Ig-like_fold"/>
</dbReference>
<dbReference type="InterPro" id="IPR003597">
    <property type="entry name" value="Ig_C1-set"/>
</dbReference>
<dbReference type="InterPro" id="IPR050208">
    <property type="entry name" value="MHC_class-I_related"/>
</dbReference>
<dbReference type="InterPro" id="IPR011161">
    <property type="entry name" value="MHC_I-like_Ag-recog"/>
</dbReference>
<dbReference type="InterPro" id="IPR037055">
    <property type="entry name" value="MHC_I-like_Ag-recog_sf"/>
</dbReference>
<dbReference type="InterPro" id="IPR011162">
    <property type="entry name" value="MHC_I/II-like_Ag-recog"/>
</dbReference>
<dbReference type="PANTHER" id="PTHR16675">
    <property type="entry name" value="MHC CLASS I-RELATED"/>
    <property type="match status" value="1"/>
</dbReference>
<dbReference type="PANTHER" id="PTHR16675:SF155">
    <property type="entry name" value="T-CELL SURFACE GLYCOPROTEIN CD1C"/>
    <property type="match status" value="1"/>
</dbReference>
<dbReference type="Pfam" id="PF07654">
    <property type="entry name" value="C1-set"/>
    <property type="match status" value="1"/>
</dbReference>
<dbReference type="Pfam" id="PF16497">
    <property type="entry name" value="MHC_I_3"/>
    <property type="match status" value="1"/>
</dbReference>
<dbReference type="SMART" id="SM00407">
    <property type="entry name" value="IGc1"/>
    <property type="match status" value="1"/>
</dbReference>
<dbReference type="SUPFAM" id="SSF48726">
    <property type="entry name" value="Immunoglobulin"/>
    <property type="match status" value="1"/>
</dbReference>
<dbReference type="SUPFAM" id="SSF54452">
    <property type="entry name" value="MHC antigen-recognition domain"/>
    <property type="match status" value="1"/>
</dbReference>
<dbReference type="PROSITE" id="PS50835">
    <property type="entry name" value="IG_LIKE"/>
    <property type="match status" value="1"/>
</dbReference>
<comment type="function">
    <text evidence="3 4 5 7">Antigen-presenting protein that binds self and non-self lipid and glycolipid antigens and presents them to T-cell receptors on natural killer T-cells.</text>
</comment>
<comment type="subunit">
    <text evidence="7">Heterodimer with B2M (beta-2-microglobulin).</text>
</comment>
<comment type="interaction">
    <interactant intactId="EBI-2836704">
        <id>P29017</id>
    </interactant>
    <interactant intactId="EBI-702390">
        <id>Q9UBB4</id>
        <label>ATXN10</label>
    </interactant>
    <organismsDiffer>false</organismsDiffer>
    <experiments>3</experiments>
</comment>
<comment type="interaction">
    <interactant intactId="EBI-2836704">
        <id>P29017</id>
    </interactant>
    <interactant intactId="EBI-1055254">
        <id>Q8WXH2</id>
        <label>JPH3</label>
    </interactant>
    <organismsDiffer>false</organismsDiffer>
    <experiments>3</experiments>
</comment>
<comment type="subcellular location">
    <subcellularLocation>
        <location evidence="4 5">Cell membrane</location>
        <topology evidence="1">Single-pass type I membrane protein</topology>
    </subcellularLocation>
    <subcellularLocation>
        <location evidence="4 9">Endosome membrane</location>
        <topology>Single-pass type I membrane protein</topology>
    </subcellularLocation>
    <subcellularLocation>
        <location evidence="4">Lysosome</location>
    </subcellularLocation>
    <text evidence="4 9">Subject to intracellular trafficking between the cell membrane and endosomes.</text>
</comment>
<comment type="tissue specificity">
    <text>Expressed on cortical thymocytes, on certain T-cell leukemias, and in various other tissues.</text>
</comment>
<comment type="miscellaneous">
    <text>During protein synthesis and maturation, CD1 family members bind endogenous lipids that are replaced by lipid or glycolipid antigens when the proteins are internalized and pass through endosomes or lysosomes, before trafficking back to the cell surface.</text>
</comment>
<evidence type="ECO:0000255" key="1"/>
<evidence type="ECO:0000255" key="2">
    <source>
        <dbReference type="PROSITE-ProRule" id="PRU00114"/>
    </source>
</evidence>
<evidence type="ECO:0000269" key="3">
    <source>
    </source>
</evidence>
<evidence type="ECO:0000269" key="4">
    <source>
    </source>
</evidence>
<evidence type="ECO:0000269" key="5">
    <source>
    </source>
</evidence>
<evidence type="ECO:0000269" key="6">
    <source>
    </source>
</evidence>
<evidence type="ECO:0000269" key="7">
    <source>
    </source>
</evidence>
<evidence type="ECO:0000269" key="8">
    <source>
    </source>
</evidence>
<evidence type="ECO:0000269" key="9">
    <source>
    </source>
</evidence>
<evidence type="ECO:0000305" key="10"/>
<evidence type="ECO:0007829" key="11">
    <source>
        <dbReference type="PDB" id="3OV6"/>
    </source>
</evidence>
<evidence type="ECO:0007829" key="12">
    <source>
        <dbReference type="PDB" id="5C9J"/>
    </source>
</evidence>
<evidence type="ECO:0007829" key="13">
    <source>
        <dbReference type="PDB" id="6C09"/>
    </source>
</evidence>
<gene>
    <name type="primary">CD1C</name>
</gene>
<name>CD1C_HUMAN</name>
<reference key="1">
    <citation type="journal article" date="1987" name="Proc. Natl. Acad. Sci. U.S.A.">
        <title>Structure and expression of the human thymocyte antigens CD1a, CD1b, and CD1c.</title>
        <authorList>
            <person name="Martin L.H."/>
            <person name="Calabi F."/>
            <person name="Lefebvre F.-A."/>
            <person name="Bilsland C.A.G."/>
            <person name="Milstein C."/>
        </authorList>
    </citation>
    <scope>NUCLEOTIDE SEQUENCE [GENOMIC DNA]</scope>
</reference>
<reference key="2">
    <citation type="journal article" date="1989" name="J. Immunol.">
        <title>Expression of cDNA clones encoding the thymocyte antigens CD1a, b, c demonstrates a hierarchy of exclusion in fibroblasts.</title>
        <authorList>
            <person name="Aruffo A."/>
            <person name="Seed B."/>
        </authorList>
    </citation>
    <scope>NUCLEOTIDE SEQUENCE [MRNA]</scope>
    <scope>VARIANT SER-300</scope>
</reference>
<reference key="3">
    <citation type="submission" date="2004-06" db="EMBL/GenBank/DDBJ databases">
        <title>Cloning of human full open reading frames in Gateway(TM) system entry vector (pDONR201).</title>
        <authorList>
            <person name="Ebert L."/>
            <person name="Schick M."/>
            <person name="Neubert P."/>
            <person name="Schatten R."/>
            <person name="Henze S."/>
            <person name="Korn B."/>
        </authorList>
    </citation>
    <scope>NUCLEOTIDE SEQUENCE [LARGE SCALE MRNA]</scope>
</reference>
<reference key="4">
    <citation type="journal article" date="2006" name="Nature">
        <title>The DNA sequence and biological annotation of human chromosome 1.</title>
        <authorList>
            <person name="Gregory S.G."/>
            <person name="Barlow K.F."/>
            <person name="McLay K.E."/>
            <person name="Kaul R."/>
            <person name="Swarbreck D."/>
            <person name="Dunham A."/>
            <person name="Scott C.E."/>
            <person name="Howe K.L."/>
            <person name="Woodfine K."/>
            <person name="Spencer C.C.A."/>
            <person name="Jones M.C."/>
            <person name="Gillson C."/>
            <person name="Searle S."/>
            <person name="Zhou Y."/>
            <person name="Kokocinski F."/>
            <person name="McDonald L."/>
            <person name="Evans R."/>
            <person name="Phillips K."/>
            <person name="Atkinson A."/>
            <person name="Cooper R."/>
            <person name="Jones C."/>
            <person name="Hall R.E."/>
            <person name="Andrews T.D."/>
            <person name="Lloyd C."/>
            <person name="Ainscough R."/>
            <person name="Almeida J.P."/>
            <person name="Ambrose K.D."/>
            <person name="Anderson F."/>
            <person name="Andrew R.W."/>
            <person name="Ashwell R.I.S."/>
            <person name="Aubin K."/>
            <person name="Babbage A.K."/>
            <person name="Bagguley C.L."/>
            <person name="Bailey J."/>
            <person name="Beasley H."/>
            <person name="Bethel G."/>
            <person name="Bird C.P."/>
            <person name="Bray-Allen S."/>
            <person name="Brown J.Y."/>
            <person name="Brown A.J."/>
            <person name="Buckley D."/>
            <person name="Burton J."/>
            <person name="Bye J."/>
            <person name="Carder C."/>
            <person name="Chapman J.C."/>
            <person name="Clark S.Y."/>
            <person name="Clarke G."/>
            <person name="Clee C."/>
            <person name="Cobley V."/>
            <person name="Collier R.E."/>
            <person name="Corby N."/>
            <person name="Coville G.J."/>
            <person name="Davies J."/>
            <person name="Deadman R."/>
            <person name="Dunn M."/>
            <person name="Earthrowl M."/>
            <person name="Ellington A.G."/>
            <person name="Errington H."/>
            <person name="Frankish A."/>
            <person name="Frankland J."/>
            <person name="French L."/>
            <person name="Garner P."/>
            <person name="Garnett J."/>
            <person name="Gay L."/>
            <person name="Ghori M.R.J."/>
            <person name="Gibson R."/>
            <person name="Gilby L.M."/>
            <person name="Gillett W."/>
            <person name="Glithero R.J."/>
            <person name="Grafham D.V."/>
            <person name="Griffiths C."/>
            <person name="Griffiths-Jones S."/>
            <person name="Grocock R."/>
            <person name="Hammond S."/>
            <person name="Harrison E.S.I."/>
            <person name="Hart E."/>
            <person name="Haugen E."/>
            <person name="Heath P.D."/>
            <person name="Holmes S."/>
            <person name="Holt K."/>
            <person name="Howden P.J."/>
            <person name="Hunt A.R."/>
            <person name="Hunt S.E."/>
            <person name="Hunter G."/>
            <person name="Isherwood J."/>
            <person name="James R."/>
            <person name="Johnson C."/>
            <person name="Johnson D."/>
            <person name="Joy A."/>
            <person name="Kay M."/>
            <person name="Kershaw J.K."/>
            <person name="Kibukawa M."/>
            <person name="Kimberley A.M."/>
            <person name="King A."/>
            <person name="Knights A.J."/>
            <person name="Lad H."/>
            <person name="Laird G."/>
            <person name="Lawlor S."/>
            <person name="Leongamornlert D.A."/>
            <person name="Lloyd D.M."/>
            <person name="Loveland J."/>
            <person name="Lovell J."/>
            <person name="Lush M.J."/>
            <person name="Lyne R."/>
            <person name="Martin S."/>
            <person name="Mashreghi-Mohammadi M."/>
            <person name="Matthews L."/>
            <person name="Matthews N.S.W."/>
            <person name="McLaren S."/>
            <person name="Milne S."/>
            <person name="Mistry S."/>
            <person name="Moore M.J.F."/>
            <person name="Nickerson T."/>
            <person name="O'Dell C.N."/>
            <person name="Oliver K."/>
            <person name="Palmeiri A."/>
            <person name="Palmer S.A."/>
            <person name="Parker A."/>
            <person name="Patel D."/>
            <person name="Pearce A.V."/>
            <person name="Peck A.I."/>
            <person name="Pelan S."/>
            <person name="Phelps K."/>
            <person name="Phillimore B.J."/>
            <person name="Plumb R."/>
            <person name="Rajan J."/>
            <person name="Raymond C."/>
            <person name="Rouse G."/>
            <person name="Saenphimmachak C."/>
            <person name="Sehra H.K."/>
            <person name="Sheridan E."/>
            <person name="Shownkeen R."/>
            <person name="Sims S."/>
            <person name="Skuce C.D."/>
            <person name="Smith M."/>
            <person name="Steward C."/>
            <person name="Subramanian S."/>
            <person name="Sycamore N."/>
            <person name="Tracey A."/>
            <person name="Tromans A."/>
            <person name="Van Helmond Z."/>
            <person name="Wall M."/>
            <person name="Wallis J.M."/>
            <person name="White S."/>
            <person name="Whitehead S.L."/>
            <person name="Wilkinson J.E."/>
            <person name="Willey D.L."/>
            <person name="Williams H."/>
            <person name="Wilming L."/>
            <person name="Wray P.W."/>
            <person name="Wu Z."/>
            <person name="Coulson A."/>
            <person name="Vaudin M."/>
            <person name="Sulston J.E."/>
            <person name="Durbin R.M."/>
            <person name="Hubbard T."/>
            <person name="Wooster R."/>
            <person name="Dunham I."/>
            <person name="Carter N.P."/>
            <person name="McVean G."/>
            <person name="Ross M.T."/>
            <person name="Harrow J."/>
            <person name="Olson M.V."/>
            <person name="Beck S."/>
            <person name="Rogers J."/>
            <person name="Bentley D.R."/>
        </authorList>
    </citation>
    <scope>NUCLEOTIDE SEQUENCE [LARGE SCALE GENOMIC DNA]</scope>
</reference>
<reference key="5">
    <citation type="journal article" date="2004" name="Genome Res.">
        <title>The status, quality, and expansion of the NIH full-length cDNA project: the Mammalian Gene Collection (MGC).</title>
        <authorList>
            <consortium name="The MGC Project Team"/>
        </authorList>
    </citation>
    <scope>NUCLEOTIDE SEQUENCE [LARGE SCALE MRNA]</scope>
</reference>
<reference key="6">
    <citation type="journal article" date="1999" name="Tissue Antigens">
        <title>Polymorphism of human CD1 genes.</title>
        <authorList>
            <person name="Han M."/>
            <person name="Hannick L.I."/>
            <person name="DiBrino M."/>
            <person name="Robinson M.A."/>
        </authorList>
    </citation>
    <scope>NUCLEOTIDE SEQUENCE [GENOMIC DNA] OF 19-109</scope>
</reference>
<reference key="7">
    <citation type="journal article" date="1986" name="Proc. Natl. Acad. Sci. U.S.A.">
        <title>Isolation of CD1 genes: a family of major histocompatibility complex-related differentiation antigens.</title>
        <authorList>
            <person name="Martin L.H."/>
            <person name="Calabi F."/>
            <person name="Milstein C."/>
        </authorList>
    </citation>
    <scope>NUCLEOTIDE SEQUENCE [GENOMIC DNA] OF 204-296</scope>
</reference>
<reference key="8">
    <citation type="journal article" date="2000" name="J. Exp. Med.">
        <title>Human CD1b and CD1c isoforms survey different intracellular compartments for the presentation of microbial lipid antigens.</title>
        <authorList>
            <person name="Briken V."/>
            <person name="Jackman R.M."/>
            <person name="Watts G.F.M."/>
            <person name="Rogers R.A."/>
            <person name="Porcelli S.A."/>
        </authorList>
    </citation>
    <scope>FUNCTION</scope>
    <scope>INTERNALIZATION SIGNAL</scope>
    <scope>SUBCELLULAR LOCATION</scope>
</reference>
<reference key="9">
    <citation type="journal article" date="2000" name="Nature">
        <title>CD1c-mediated T-cell recognition of isoprenoid glycolipids in Mycobacterium tuberculosis infection.</title>
        <authorList>
            <person name="Moody D.B."/>
            <person name="Ulrichs T."/>
            <person name="Muehlecker W."/>
            <person name="Young D.C."/>
            <person name="Gurcha S.S."/>
            <person name="Grant E."/>
            <person name="Rosat J.-P."/>
            <person name="Brenner M.B."/>
            <person name="Costello C.E."/>
            <person name="Besra G.S."/>
            <person name="Porcelli S.A."/>
        </authorList>
    </citation>
    <scope>FUNCTION</scope>
</reference>
<reference key="10">
    <citation type="journal article" date="2000" name="Proc. Natl. Acad. Sci. U.S.A.">
        <title>CD1c molecules broadly survey the endocytic system.</title>
        <authorList>
            <person name="Sugita M."/>
            <person name="van Der Wel N."/>
            <person name="Rogers R.A."/>
            <person name="Peters P.J."/>
            <person name="Brenner M.B."/>
        </authorList>
    </citation>
    <scope>FUNCTION</scope>
    <scope>SUBCELLULAR LOCATION</scope>
</reference>
<reference key="11">
    <citation type="journal article" date="2009" name="Nat. Biotechnol.">
        <title>Mass-spectrometric identification and relative quantification of N-linked cell surface glycoproteins.</title>
        <authorList>
            <person name="Wollscheid B."/>
            <person name="Bausch-Fluck D."/>
            <person name="Henderson C."/>
            <person name="O'Brien R."/>
            <person name="Bibel M."/>
            <person name="Schiess R."/>
            <person name="Aebersold R."/>
            <person name="Watts J.D."/>
        </authorList>
    </citation>
    <scope>GLYCOSYLATION [LARGE SCALE ANALYSIS] AT ASN-38 AND ASN-75</scope>
    <source>
        <tissue>Leukemic T-cell</tissue>
    </source>
</reference>
<reference key="12">
    <citation type="journal article" date="2010" name="Immunity">
        <title>The 2.5 a structure of CD1c in complex with a mycobacterial lipid reveals an open groove ideally suited for diverse antigen presentation.</title>
        <authorList>
            <person name="Scharf L."/>
            <person name="Li N.S."/>
            <person name="Hawk A.J."/>
            <person name="Garzon D."/>
            <person name="Zhang T."/>
            <person name="Fox L.M."/>
            <person name="Kazen A.R."/>
            <person name="Shah S."/>
            <person name="Haddadian E.J."/>
            <person name="Gumperz J.E."/>
            <person name="Saghatelian A."/>
            <person name="Faraldo-Gomez J.D."/>
            <person name="Meredith S.C."/>
            <person name="Piccirilli J.A."/>
            <person name="Adams E.J."/>
        </authorList>
    </citation>
    <scope>X-RAY CRYSTALLOGRAPHY (2.5 ANGSTROMS) OF 19-201 IN COMPLEX WITH MANNOSYL-BETA1-PHOSPHOMYCOKETIDE</scope>
    <scope>FUNCTION</scope>
    <scope>SUBUNIT</scope>
    <scope>DISULFIDE BOND</scope>
    <scope>GLYCOSYLATION AT ASN-38</scope>
</reference>